<reference key="1">
    <citation type="journal article" date="1998" name="Science">
        <title>Genome sequence of the nematode C. elegans: a platform for investigating biology.</title>
        <authorList>
            <consortium name="The C. elegans sequencing consortium"/>
        </authorList>
    </citation>
    <scope>NUCLEOTIDE SEQUENCE [LARGE SCALE GENOMIC DNA]</scope>
    <source>
        <strain>Bristol N2</strain>
    </source>
</reference>
<reference key="2">
    <citation type="journal article" date="2020" name="Mol. Cell">
        <title>ZAKalpha recognizes stalled ribosomes through partially redundant sensor domains.</title>
        <authorList>
            <person name="Vind A.C."/>
            <person name="Snieckute G."/>
            <person name="Blasius M."/>
            <person name="Tiedje C."/>
            <person name="Krogh N."/>
            <person name="Bekker-Jensen D.B."/>
            <person name="Andersen K.L."/>
            <person name="Nordgaard C."/>
            <person name="Tollenaere M.A.X."/>
            <person name="Lund A.H."/>
            <person name="Olsen J.V."/>
            <person name="Nielsen H."/>
            <person name="Bekker-Jensen S."/>
        </authorList>
    </citation>
    <scope>FUNCTION</scope>
    <scope>TISSUE SPECIFICITY</scope>
    <scope>DISRUPTION PHENOTYPE</scope>
</reference>
<accession>H2KZW3</accession>
<accession>H2KZW5</accession>
<accession>Q8I7J0</accession>
<protein>
    <recommendedName>
        <fullName evidence="8">Mitogen-activated protein kinase kinase kinase zak-1</fullName>
    </recommendedName>
    <alternativeName>
        <fullName evidence="8">Mitogen-activated protein kinase kinase kinase 20 homolog</fullName>
        <ecNumber evidence="1">2.7.11.25</ecNumber>
    </alternativeName>
</protein>
<dbReference type="EC" id="2.7.11.25" evidence="1"/>
<dbReference type="EMBL" id="BX284603">
    <property type="protein sequence ID" value="CCD70171.1"/>
    <property type="molecule type" value="Genomic_DNA"/>
</dbReference>
<dbReference type="EMBL" id="BX284603">
    <property type="protein sequence ID" value="CCD70178.1"/>
    <property type="molecule type" value="Genomic_DNA"/>
</dbReference>
<dbReference type="EMBL" id="BX284603">
    <property type="protein sequence ID" value="CCD70182.1"/>
    <property type="molecule type" value="Genomic_DNA"/>
</dbReference>
<dbReference type="RefSeq" id="NP_001254942.1">
    <property type="nucleotide sequence ID" value="NM_001268013.1"/>
</dbReference>
<dbReference type="RefSeq" id="NP_001367790.1">
    <molecule id="H2KZW3-1"/>
    <property type="nucleotide sequence ID" value="NM_001379778.1"/>
</dbReference>
<dbReference type="RefSeq" id="NP_001367792.1">
    <molecule id="H2KZW3-2"/>
    <property type="nucleotide sequence ID" value="NM_001379779.2"/>
</dbReference>
<dbReference type="RefSeq" id="NP_001379904.1">
    <molecule id="H2KZW3-3"/>
    <property type="nucleotide sequence ID" value="NM_001392131.1"/>
</dbReference>
<dbReference type="RefSeq" id="NP_498490.3">
    <property type="nucleotide sequence ID" value="NM_066089.7"/>
</dbReference>
<dbReference type="RefSeq" id="NP_871641.1">
    <property type="nucleotide sequence ID" value="NM_181912.3"/>
</dbReference>
<dbReference type="SMR" id="H2KZW3"/>
<dbReference type="FunCoup" id="H2KZW3">
    <property type="interactions" value="402"/>
</dbReference>
<dbReference type="STRING" id="6239.R13F6.6c.1"/>
<dbReference type="PaxDb" id="6239-R13F6.6c"/>
<dbReference type="PeptideAtlas" id="H2KZW3"/>
<dbReference type="EnsemblMetazoa" id="R13F6.6a.1">
    <molecule id="H2KZW3-2"/>
    <property type="protein sequence ID" value="R13F6.6a.1"/>
    <property type="gene ID" value="WBGene00006971"/>
</dbReference>
<dbReference type="EnsemblMetazoa" id="R13F6.6a.2">
    <molecule id="H2KZW3-2"/>
    <property type="protein sequence ID" value="R13F6.6a.2"/>
    <property type="gene ID" value="WBGene00006971"/>
</dbReference>
<dbReference type="EnsemblMetazoa" id="R13F6.6b.1">
    <molecule id="H2KZW3-3"/>
    <property type="protein sequence ID" value="R13F6.6b.1"/>
    <property type="gene ID" value="WBGene00006971"/>
</dbReference>
<dbReference type="EnsemblMetazoa" id="R13F6.6b.2">
    <molecule id="H2KZW3-3"/>
    <property type="protein sequence ID" value="R13F6.6b.2"/>
    <property type="gene ID" value="WBGene00006971"/>
</dbReference>
<dbReference type="EnsemblMetazoa" id="R13F6.6c.1">
    <molecule id="H2KZW3-1"/>
    <property type="protein sequence ID" value="R13F6.6c.1"/>
    <property type="gene ID" value="WBGene00006971"/>
</dbReference>
<dbReference type="GeneID" id="175954"/>
<dbReference type="UCSC" id="R13F6.6a">
    <property type="organism name" value="c. elegans"/>
</dbReference>
<dbReference type="AGR" id="WB:WBGene00006971"/>
<dbReference type="WormBase" id="R13F6.6a">
    <molecule id="H2KZW3-2"/>
    <property type="protein sequence ID" value="CE39026"/>
    <property type="gene ID" value="WBGene00006971"/>
    <property type="gene designation" value="zak-1"/>
</dbReference>
<dbReference type="WormBase" id="R13F6.6b">
    <molecule id="H2KZW3-3"/>
    <property type="protein sequence ID" value="CE32708"/>
    <property type="gene ID" value="WBGene00006971"/>
    <property type="gene designation" value="zak-1"/>
</dbReference>
<dbReference type="WormBase" id="R13F6.6c">
    <molecule id="H2KZW3-1"/>
    <property type="protein sequence ID" value="CE45943"/>
    <property type="gene ID" value="WBGene00006971"/>
    <property type="gene designation" value="zak-1"/>
</dbReference>
<dbReference type="eggNOG" id="KOG0192">
    <property type="taxonomic scope" value="Eukaryota"/>
</dbReference>
<dbReference type="GeneTree" id="ENSGT00940000161352"/>
<dbReference type="HOGENOM" id="CLU_021272_0_0_1"/>
<dbReference type="InParanoid" id="H2KZW3"/>
<dbReference type="OMA" id="MSPEMIL"/>
<dbReference type="OrthoDB" id="339325at2759"/>
<dbReference type="PhylomeDB" id="H2KZW3"/>
<dbReference type="PRO" id="PR:H2KZW3"/>
<dbReference type="Proteomes" id="UP000001940">
    <property type="component" value="Chromosome III"/>
</dbReference>
<dbReference type="Bgee" id="WBGene00006971">
    <property type="expression patterns" value="Expressed in larva and 3 other cell types or tissues"/>
</dbReference>
<dbReference type="ExpressionAtlas" id="H2KZW3">
    <property type="expression patterns" value="baseline and differential"/>
</dbReference>
<dbReference type="GO" id="GO:0005737">
    <property type="term" value="C:cytoplasm"/>
    <property type="evidence" value="ECO:0000318"/>
    <property type="project" value="GO_Central"/>
</dbReference>
<dbReference type="GO" id="GO:0005634">
    <property type="term" value="C:nucleus"/>
    <property type="evidence" value="ECO:0007669"/>
    <property type="project" value="UniProtKB-SubCell"/>
</dbReference>
<dbReference type="GO" id="GO:0005524">
    <property type="term" value="F:ATP binding"/>
    <property type="evidence" value="ECO:0007669"/>
    <property type="project" value="UniProtKB-KW"/>
</dbReference>
<dbReference type="GO" id="GO:0004709">
    <property type="term" value="F:MAP kinase kinase kinase activity"/>
    <property type="evidence" value="ECO:0000315"/>
    <property type="project" value="UniProtKB"/>
</dbReference>
<dbReference type="GO" id="GO:0046872">
    <property type="term" value="F:metal ion binding"/>
    <property type="evidence" value="ECO:0007669"/>
    <property type="project" value="UniProtKB-KW"/>
</dbReference>
<dbReference type="GO" id="GO:0004672">
    <property type="term" value="F:protein kinase activity"/>
    <property type="evidence" value="ECO:0000318"/>
    <property type="project" value="GO_Central"/>
</dbReference>
<dbReference type="GO" id="GO:0019843">
    <property type="term" value="F:rRNA binding"/>
    <property type="evidence" value="ECO:0007669"/>
    <property type="project" value="UniProtKB-KW"/>
</dbReference>
<dbReference type="GO" id="GO:0007165">
    <property type="term" value="P:signal transduction"/>
    <property type="evidence" value="ECO:0000318"/>
    <property type="project" value="GO_Central"/>
</dbReference>
<dbReference type="GO" id="GO:0051403">
    <property type="term" value="P:stress-activated MAPK cascade"/>
    <property type="evidence" value="ECO:0000315"/>
    <property type="project" value="UniProtKB"/>
</dbReference>
<dbReference type="FunFam" id="1.10.150.50:FF:000110">
    <property type="entry name" value="Mammalian ZAK kinase homolog"/>
    <property type="match status" value="1"/>
</dbReference>
<dbReference type="Gene3D" id="3.30.200.20">
    <property type="entry name" value="Phosphorylase Kinase, domain 1"/>
    <property type="match status" value="1"/>
</dbReference>
<dbReference type="Gene3D" id="1.10.150.50">
    <property type="entry name" value="Transcription Factor, Ets-1"/>
    <property type="match status" value="1"/>
</dbReference>
<dbReference type="Gene3D" id="1.10.510.10">
    <property type="entry name" value="Transferase(Phosphotransferase) domain 1"/>
    <property type="match status" value="1"/>
</dbReference>
<dbReference type="InterPro" id="IPR011009">
    <property type="entry name" value="Kinase-like_dom_sf"/>
</dbReference>
<dbReference type="InterPro" id="IPR000719">
    <property type="entry name" value="Prot_kinase_dom"/>
</dbReference>
<dbReference type="InterPro" id="IPR017441">
    <property type="entry name" value="Protein_kinase_ATP_BS"/>
</dbReference>
<dbReference type="InterPro" id="IPR001660">
    <property type="entry name" value="SAM"/>
</dbReference>
<dbReference type="InterPro" id="IPR013761">
    <property type="entry name" value="SAM/pointed_sf"/>
</dbReference>
<dbReference type="InterPro" id="IPR001245">
    <property type="entry name" value="Ser-Thr/Tyr_kinase_cat_dom"/>
</dbReference>
<dbReference type="InterPro" id="IPR008271">
    <property type="entry name" value="Ser/Thr_kinase_AS"/>
</dbReference>
<dbReference type="InterPro" id="IPR051681">
    <property type="entry name" value="Ser/Thr_Kinases-Pseudokinases"/>
</dbReference>
<dbReference type="PANTHER" id="PTHR44329:SF288">
    <property type="entry name" value="MITOGEN-ACTIVATED PROTEIN KINASE KINASE KINASE 20"/>
    <property type="match status" value="1"/>
</dbReference>
<dbReference type="PANTHER" id="PTHR44329">
    <property type="entry name" value="SERINE/THREONINE-PROTEIN KINASE TNNI3K-RELATED"/>
    <property type="match status" value="1"/>
</dbReference>
<dbReference type="Pfam" id="PF07714">
    <property type="entry name" value="PK_Tyr_Ser-Thr"/>
    <property type="match status" value="1"/>
</dbReference>
<dbReference type="Pfam" id="PF07647">
    <property type="entry name" value="SAM_2"/>
    <property type="match status" value="1"/>
</dbReference>
<dbReference type="PRINTS" id="PR00109">
    <property type="entry name" value="TYRKINASE"/>
</dbReference>
<dbReference type="SMART" id="SM00220">
    <property type="entry name" value="S_TKc"/>
    <property type="match status" value="1"/>
</dbReference>
<dbReference type="SMART" id="SM00454">
    <property type="entry name" value="SAM"/>
    <property type="match status" value="1"/>
</dbReference>
<dbReference type="SUPFAM" id="SSF56112">
    <property type="entry name" value="Protein kinase-like (PK-like)"/>
    <property type="match status" value="1"/>
</dbReference>
<dbReference type="SUPFAM" id="SSF47769">
    <property type="entry name" value="SAM/Pointed domain"/>
    <property type="match status" value="1"/>
</dbReference>
<dbReference type="PROSITE" id="PS00107">
    <property type="entry name" value="PROTEIN_KINASE_ATP"/>
    <property type="match status" value="1"/>
</dbReference>
<dbReference type="PROSITE" id="PS50011">
    <property type="entry name" value="PROTEIN_KINASE_DOM"/>
    <property type="match status" value="1"/>
</dbReference>
<dbReference type="PROSITE" id="PS00108">
    <property type="entry name" value="PROTEIN_KINASE_ST"/>
    <property type="match status" value="1"/>
</dbReference>
<dbReference type="PROSITE" id="PS50105">
    <property type="entry name" value="SAM_DOMAIN"/>
    <property type="match status" value="1"/>
</dbReference>
<organism>
    <name type="scientific">Caenorhabditis elegans</name>
    <dbReference type="NCBI Taxonomy" id="6239"/>
    <lineage>
        <taxon>Eukaryota</taxon>
        <taxon>Metazoa</taxon>
        <taxon>Ecdysozoa</taxon>
        <taxon>Nematoda</taxon>
        <taxon>Chromadorea</taxon>
        <taxon>Rhabditida</taxon>
        <taxon>Rhabditina</taxon>
        <taxon>Rhabditomorpha</taxon>
        <taxon>Rhabditoidea</taxon>
        <taxon>Rhabditidae</taxon>
        <taxon>Peloderinae</taxon>
        <taxon>Caenorhabditis</taxon>
    </lineage>
</organism>
<evidence type="ECO:0000250" key="1">
    <source>
        <dbReference type="UniProtKB" id="Q9NYL2"/>
    </source>
</evidence>
<evidence type="ECO:0000255" key="2"/>
<evidence type="ECO:0000255" key="3">
    <source>
        <dbReference type="PROSITE-ProRule" id="PRU00159"/>
    </source>
</evidence>
<evidence type="ECO:0000255" key="4">
    <source>
        <dbReference type="PROSITE-ProRule" id="PRU00184"/>
    </source>
</evidence>
<evidence type="ECO:0000256" key="5">
    <source>
        <dbReference type="SAM" id="MobiDB-lite"/>
    </source>
</evidence>
<evidence type="ECO:0000269" key="6">
    <source>
    </source>
</evidence>
<evidence type="ECO:0000303" key="7">
    <source>
    </source>
</evidence>
<evidence type="ECO:0000305" key="8"/>
<evidence type="ECO:0000312" key="9">
    <source>
        <dbReference type="WormBase" id="R13F6.6c"/>
    </source>
</evidence>
<proteinExistence type="evidence at transcript level"/>
<keyword id="KW-0025">Alternative splicing</keyword>
<keyword id="KW-0067">ATP-binding</keyword>
<keyword id="KW-0175">Coiled coil</keyword>
<keyword id="KW-0963">Cytoplasm</keyword>
<keyword id="KW-0418">Kinase</keyword>
<keyword id="KW-0460">Magnesium</keyword>
<keyword id="KW-0479">Metal-binding</keyword>
<keyword id="KW-0547">Nucleotide-binding</keyword>
<keyword id="KW-0539">Nucleus</keyword>
<keyword id="KW-1185">Reference proteome</keyword>
<keyword id="KW-0694">RNA-binding</keyword>
<keyword id="KW-0699">rRNA-binding</keyword>
<keyword id="KW-0723">Serine/threonine-protein kinase</keyword>
<keyword id="KW-0808">Transferase</keyword>
<comment type="function">
    <text evidence="1 6">Stress-activated component of a protein kinase signal transduction cascade that promotes programmed cell death in response to ribotoxic stress (PubMed:32289254). Acts as the proximal sensor of ribotoxic stress: directly binds to the ribosome, thereby acting as a sentinel for colliding ribosomes (By similarity). Upon ribosome collisions, activates the stress-activated protein kinase signal transduction cascade, leading to programmed cell death (By similarity). Acts by catalyzing phosphorylation of MAP kinase kinases, leading to activation of the JNK and MAP kinase p38 pathways (PubMed:32289254).</text>
</comment>
<comment type="catalytic activity">
    <reaction evidence="1">
        <text>L-seryl-[protein] + ATP = O-phospho-L-seryl-[protein] + ADP + H(+)</text>
        <dbReference type="Rhea" id="RHEA:17989"/>
        <dbReference type="Rhea" id="RHEA-COMP:9863"/>
        <dbReference type="Rhea" id="RHEA-COMP:11604"/>
        <dbReference type="ChEBI" id="CHEBI:15378"/>
        <dbReference type="ChEBI" id="CHEBI:29999"/>
        <dbReference type="ChEBI" id="CHEBI:30616"/>
        <dbReference type="ChEBI" id="CHEBI:83421"/>
        <dbReference type="ChEBI" id="CHEBI:456216"/>
        <dbReference type="EC" id="2.7.11.25"/>
    </reaction>
    <physiologicalReaction direction="left-to-right" evidence="1">
        <dbReference type="Rhea" id="RHEA:17990"/>
    </physiologicalReaction>
</comment>
<comment type="catalytic activity">
    <reaction evidence="1">
        <text>L-threonyl-[protein] + ATP = O-phospho-L-threonyl-[protein] + ADP + H(+)</text>
        <dbReference type="Rhea" id="RHEA:46608"/>
        <dbReference type="Rhea" id="RHEA-COMP:11060"/>
        <dbReference type="Rhea" id="RHEA-COMP:11605"/>
        <dbReference type="ChEBI" id="CHEBI:15378"/>
        <dbReference type="ChEBI" id="CHEBI:30013"/>
        <dbReference type="ChEBI" id="CHEBI:30616"/>
        <dbReference type="ChEBI" id="CHEBI:61977"/>
        <dbReference type="ChEBI" id="CHEBI:456216"/>
        <dbReference type="EC" id="2.7.11.25"/>
    </reaction>
    <physiologicalReaction direction="left-to-right" evidence="1">
        <dbReference type="Rhea" id="RHEA:46609"/>
    </physiologicalReaction>
</comment>
<comment type="cofactor">
    <cofactor evidence="1">
        <name>Mg(2+)</name>
        <dbReference type="ChEBI" id="CHEBI:18420"/>
    </cofactor>
</comment>
<comment type="subcellular location">
    <subcellularLocation>
        <location evidence="1">Cytoplasm</location>
    </subcellularLocation>
    <subcellularLocation>
        <location evidence="1">Nucleus</location>
    </subcellularLocation>
</comment>
<comment type="alternative products">
    <event type="alternative splicing"/>
    <isoform>
        <id>H2KZW3-1</id>
        <name>c</name>
        <sequence type="displayed"/>
    </isoform>
    <isoform>
        <id>H2KZW3-2</id>
        <name>a</name>
        <sequence type="described" ref="VSP_061715"/>
    </isoform>
    <isoform>
        <id>H2KZW3-3</id>
        <name>b</name>
        <sequence type="described" ref="VSP_061714"/>
    </isoform>
</comment>
<comment type="tissue specificity">
    <text evidence="6">Widely expressed; expressed in most tissues, including intestines, muscle and the nervous system.</text>
</comment>
<comment type="disruption phenotype">
    <text evidence="6">Impaired ribotoxic stress response, leading to reduced lifespan (PubMed:32289254). Abolished phosphorylation of MAP kinase p38 pmk-1 in response to anisomycin treatment (PubMed:32289254).</text>
</comment>
<comment type="similarity">
    <text evidence="8">Belongs to the protein kinase superfamily. STE Ser/Thr protein kinase family. MAP kinase kinase kinase subfamily.</text>
</comment>
<feature type="chain" id="PRO_0000456874" description="Mitogen-activated protein kinase kinase kinase zak-1">
    <location>
        <begin position="1"/>
        <end position="745"/>
    </location>
</feature>
<feature type="domain" description="Protein kinase" evidence="3">
    <location>
        <begin position="31"/>
        <end position="305"/>
    </location>
</feature>
<feature type="domain" description="SAM" evidence="4">
    <location>
        <begin position="366"/>
        <end position="438"/>
    </location>
</feature>
<feature type="region of interest" description="Disordered" evidence="5">
    <location>
        <begin position="693"/>
        <end position="745"/>
    </location>
</feature>
<feature type="coiled-coil region" evidence="2">
    <location>
        <begin position="307"/>
        <end position="352"/>
    </location>
</feature>
<feature type="compositionally biased region" description="Basic residues" evidence="5">
    <location>
        <begin position="735"/>
        <end position="745"/>
    </location>
</feature>
<feature type="active site" description="Proton acceptor" evidence="3">
    <location>
        <position position="159"/>
    </location>
</feature>
<feature type="binding site" evidence="3">
    <location>
        <begin position="37"/>
        <end position="45"/>
    </location>
    <ligand>
        <name>ATP</name>
        <dbReference type="ChEBI" id="CHEBI:30616"/>
    </ligand>
</feature>
<feature type="binding site" evidence="3">
    <location>
        <position position="63"/>
    </location>
    <ligand>
        <name>ATP</name>
        <dbReference type="ChEBI" id="CHEBI:30616"/>
    </ligand>
</feature>
<feature type="splice variant" id="VSP_061714" description="In isoform b.">
    <location>
        <begin position="1"/>
        <end position="323"/>
    </location>
</feature>
<feature type="splice variant" id="VSP_061715" description="In isoform a.">
    <location>
        <begin position="1"/>
        <end position="203"/>
    </location>
</feature>
<sequence length="745" mass="84581">MSTPTSNESTSSSSNNSDQRVLFPDIQRDDIQVGDHIGVGTFGAVFSGNWTLPDGSQRTIALKKVFVLEKEAEILSKIRHKNIIQFYGICKATGNDFFIVTEYAEKGSLYDFIHSEESQSFASSSGGNSFDVVVKWASQIASGIQYLHYDAVDTIIHRDLKSKNVVLDKNLVCKICDFGTSKDLTHSCTAPSWGGTAAWMSPEMILQSEGLTTATDVWSYGVVLWEILSKEVPYKDYSEFRIFTMITQSGITLAIPPSCPAPLKQLMSNCWKMTPKDRANMRQIQGELNRLAGNQKVMDECEKFMGLEDWKTEIEKQEKNVEKMRKDLEKRREQLEIREKALKQRMKVEQAVLDSARHPPEDVHQWSEHHTSHWVETVLGRVANDKKFLDRVNAAVFRNRITGARLLGMTQNDLEHLGVHKVGSRIELMKMIRKLADTQKALHNFPTLEQAKRIEMTLKTEKEAAGQLANDVDIVIIVGMYVRKMNATRRKFKFYADSDWIDDTDIPAKSKSKHASSLIKTVCFSVLDENTKKPINEPACSISSGMTTNPDWITVDTEDDVKIRVIVSVYYADIVTQPRNTEVIKVVTSLEESKILEERHVHLRLRRSSSSASISTPSPVIAPVYHPFGHLNNGFHHTTSSPQLRGFWHRKQTGMNRHGLTETELSSLQEQLRTPSPDKKVVDENVIIHVPKLTRRRRTTTTNSEDTEKSDTNNKTPESQARRVHVHGGKDKWNWKKGKSRPKFT</sequence>
<name>M3K20_CAEEL</name>
<gene>
    <name evidence="7 9" type="primary">zak-1</name>
    <name evidence="9" type="ORF">R13F6.6</name>
</gene>